<reference key="1">
    <citation type="journal article" date="2002" name="J. Invest. Dermatol.">
        <title>Isolation of a Microsporum canis gene family encoding three subtilisin-like proteases expressed in vivo.</title>
        <authorList>
            <person name="Descamps F."/>
            <person name="Brouta F."/>
            <person name="Monod M."/>
            <person name="Zaugg C."/>
            <person name="Baar D."/>
            <person name="Losson B."/>
            <person name="Mignon B."/>
        </authorList>
    </citation>
    <scope>NUCLEOTIDE SEQUENCE [GENOMIC DNA]</scope>
    <source>
        <strain>IHEM 15221</strain>
    </source>
</reference>
<accession>Q8J0D9</accession>
<organism>
    <name type="scientific">Arthroderma otae</name>
    <name type="common">Microsporum canis</name>
    <dbReference type="NCBI Taxonomy" id="63405"/>
    <lineage>
        <taxon>Eukaryota</taxon>
        <taxon>Fungi</taxon>
        <taxon>Dikarya</taxon>
        <taxon>Ascomycota</taxon>
        <taxon>Pezizomycotina</taxon>
        <taxon>Eurotiomycetes</taxon>
        <taxon>Eurotiomycetidae</taxon>
        <taxon>Onygenales</taxon>
        <taxon>Arthrodermataceae</taxon>
        <taxon>Microsporum</taxon>
    </lineage>
</organism>
<protein>
    <recommendedName>
        <fullName>Subtilisin-like protease 1</fullName>
        <ecNumber>3.4.21.-</ecNumber>
    </recommendedName>
</protein>
<proteinExistence type="inferred from homology"/>
<gene>
    <name type="primary">SUB1</name>
</gene>
<comment type="function">
    <text evidence="1">Secreted subtilisin-like serine protease with keratinolytic activity that contributes to pathogenicity.</text>
</comment>
<comment type="subcellular location">
    <subcellularLocation>
        <location evidence="1">Secreted</location>
    </subcellularLocation>
</comment>
<comment type="similarity">
    <text evidence="5">Belongs to the peptidase S8 family.</text>
</comment>
<feature type="signal peptide" evidence="2">
    <location>
        <begin position="1"/>
        <end position="19"/>
    </location>
</feature>
<feature type="propeptide" id="PRO_0000380756" evidence="1">
    <location>
        <begin position="20"/>
        <end position="116"/>
    </location>
</feature>
<feature type="chain" id="PRO_5000068278" description="Subtilisin-like protease 1">
    <location>
        <begin position="117"/>
        <end position="485"/>
    </location>
</feature>
<feature type="domain" description="Inhibitor I9" evidence="2">
    <location>
        <begin position="34"/>
        <end position="116"/>
    </location>
</feature>
<feature type="domain" description="Peptidase S8" evidence="3">
    <location>
        <begin position="126"/>
        <end position="400"/>
    </location>
</feature>
<feature type="region of interest" description="Disordered" evidence="4">
    <location>
        <begin position="377"/>
        <end position="462"/>
    </location>
</feature>
<feature type="compositionally biased region" description="Polar residues" evidence="4">
    <location>
        <begin position="377"/>
        <end position="394"/>
    </location>
</feature>
<feature type="compositionally biased region" description="Pro residues" evidence="4">
    <location>
        <begin position="409"/>
        <end position="418"/>
    </location>
</feature>
<feature type="compositionally biased region" description="Low complexity" evidence="4">
    <location>
        <begin position="419"/>
        <end position="428"/>
    </location>
</feature>
<feature type="compositionally biased region" description="Pro residues" evidence="4">
    <location>
        <begin position="433"/>
        <end position="455"/>
    </location>
</feature>
<feature type="active site" description="Charge relay system" evidence="3">
    <location>
        <position position="158"/>
    </location>
</feature>
<feature type="active site" description="Charge relay system" evidence="3">
    <location>
        <position position="190"/>
    </location>
</feature>
<feature type="active site" description="Charge relay system" evidence="3">
    <location>
        <position position="345"/>
    </location>
</feature>
<feature type="glycosylation site" description="N-linked (GlcNAc...) asparagine" evidence="2">
    <location>
        <position position="251"/>
    </location>
</feature>
<dbReference type="EC" id="3.4.21.-"/>
<dbReference type="EMBL" id="AJ431178">
    <property type="protein sequence ID" value="CAD24008.1"/>
    <property type="molecule type" value="Genomic_DNA"/>
</dbReference>
<dbReference type="SMR" id="Q8J0D9"/>
<dbReference type="MEROPS" id="S08.062"/>
<dbReference type="GlyCosmos" id="Q8J0D9">
    <property type="glycosylation" value="1 site, No reported glycans"/>
</dbReference>
<dbReference type="GO" id="GO:0005576">
    <property type="term" value="C:extracellular region"/>
    <property type="evidence" value="ECO:0007669"/>
    <property type="project" value="UniProtKB-SubCell"/>
</dbReference>
<dbReference type="GO" id="GO:0004252">
    <property type="term" value="F:serine-type endopeptidase activity"/>
    <property type="evidence" value="ECO:0007669"/>
    <property type="project" value="InterPro"/>
</dbReference>
<dbReference type="GO" id="GO:0006508">
    <property type="term" value="P:proteolysis"/>
    <property type="evidence" value="ECO:0007669"/>
    <property type="project" value="UniProtKB-KW"/>
</dbReference>
<dbReference type="CDD" id="cd04077">
    <property type="entry name" value="Peptidases_S8_PCSK9_ProteinaseK_like"/>
    <property type="match status" value="1"/>
</dbReference>
<dbReference type="FunFam" id="3.40.50.200:FF:000014">
    <property type="entry name" value="Proteinase K"/>
    <property type="match status" value="1"/>
</dbReference>
<dbReference type="Gene3D" id="3.30.70.80">
    <property type="entry name" value="Peptidase S8 propeptide/proteinase inhibitor I9"/>
    <property type="match status" value="1"/>
</dbReference>
<dbReference type="Gene3D" id="3.40.50.200">
    <property type="entry name" value="Peptidase S8/S53 domain"/>
    <property type="match status" value="1"/>
</dbReference>
<dbReference type="InterPro" id="IPR034193">
    <property type="entry name" value="PCSK9_ProteinaseK-like"/>
</dbReference>
<dbReference type="InterPro" id="IPR000209">
    <property type="entry name" value="Peptidase_S8/S53_dom"/>
</dbReference>
<dbReference type="InterPro" id="IPR036852">
    <property type="entry name" value="Peptidase_S8/S53_dom_sf"/>
</dbReference>
<dbReference type="InterPro" id="IPR023828">
    <property type="entry name" value="Peptidase_S8_Ser-AS"/>
</dbReference>
<dbReference type="InterPro" id="IPR050131">
    <property type="entry name" value="Peptidase_S8_subtilisin-like"/>
</dbReference>
<dbReference type="InterPro" id="IPR015500">
    <property type="entry name" value="Peptidase_S8_subtilisin-rel"/>
</dbReference>
<dbReference type="InterPro" id="IPR010259">
    <property type="entry name" value="S8pro/Inhibitor_I9"/>
</dbReference>
<dbReference type="InterPro" id="IPR037045">
    <property type="entry name" value="S8pro/Inhibitor_I9_sf"/>
</dbReference>
<dbReference type="PANTHER" id="PTHR43806:SF58">
    <property type="entry name" value="ALKALINE PROTEASE 1-RELATED"/>
    <property type="match status" value="1"/>
</dbReference>
<dbReference type="PANTHER" id="PTHR43806">
    <property type="entry name" value="PEPTIDASE S8"/>
    <property type="match status" value="1"/>
</dbReference>
<dbReference type="Pfam" id="PF05922">
    <property type="entry name" value="Inhibitor_I9"/>
    <property type="match status" value="1"/>
</dbReference>
<dbReference type="Pfam" id="PF00082">
    <property type="entry name" value="Peptidase_S8"/>
    <property type="match status" value="1"/>
</dbReference>
<dbReference type="PRINTS" id="PR00723">
    <property type="entry name" value="SUBTILISIN"/>
</dbReference>
<dbReference type="SUPFAM" id="SSF54897">
    <property type="entry name" value="Protease propeptides/inhibitors"/>
    <property type="match status" value="1"/>
</dbReference>
<dbReference type="SUPFAM" id="SSF52743">
    <property type="entry name" value="Subtilisin-like"/>
    <property type="match status" value="1"/>
</dbReference>
<dbReference type="PROSITE" id="PS51892">
    <property type="entry name" value="SUBTILASE"/>
    <property type="match status" value="1"/>
</dbReference>
<dbReference type="PROSITE" id="PS00138">
    <property type="entry name" value="SUBTILASE_SER"/>
    <property type="match status" value="1"/>
</dbReference>
<sequence>MGIFRFISISLAAVSAANAGHILSMGHAKTIPNSYIVVMKDGTTKEDFTHHQSWVQSIHTHNVTRRGLLDNAGVRHKYGFGSMMGYAGLFDEDTIKDISDDPKVMFVEPDTTITIHGELTQNDVPSWGLARISSQRPGTEDYTYDSSAGEGITVYSVDTGVDIHHEDFEGRASWGTNMIEDGYDKDGNGHGTHTAGTMVGKTFGIAKKAKVVAVKVLDNNGSGPTSGIIAGINWCAQHASQNGGTDKAVINMSLGGGSSSALNRAAAQAVQKGMFLAVAAGNDNQDARTSSPASEDTVCTVGASAENDERSSFSNWGPAVDLFAPGSNIVSTRPGGGSQSMSGTSMASPHVAGLGAYIMALEGISGSAVCDRLKQLGTSSVTNPGPGTRTNILINNGDAKNGGKKPSQPSQPPKPSQPSKPQQPSEPQEPSEPQEPAPGQPAPAPAPVPQHPHTPFPNDDFNFDDFWKKYFGTDHWRKTFGRFWN</sequence>
<evidence type="ECO:0000250" key="1"/>
<evidence type="ECO:0000255" key="2"/>
<evidence type="ECO:0000255" key="3">
    <source>
        <dbReference type="PROSITE-ProRule" id="PRU01240"/>
    </source>
</evidence>
<evidence type="ECO:0000256" key="4">
    <source>
        <dbReference type="SAM" id="MobiDB-lite"/>
    </source>
</evidence>
<evidence type="ECO:0000305" key="5"/>
<name>SUB1_ARTOT</name>
<keyword id="KW-0325">Glycoprotein</keyword>
<keyword id="KW-0378">Hydrolase</keyword>
<keyword id="KW-0645">Protease</keyword>
<keyword id="KW-0964">Secreted</keyword>
<keyword id="KW-0720">Serine protease</keyword>
<keyword id="KW-0732">Signal</keyword>
<keyword id="KW-0843">Virulence</keyword>
<keyword id="KW-0865">Zymogen</keyword>